<name>OPGD_ECO27</name>
<proteinExistence type="inferred from homology"/>
<dbReference type="EMBL" id="FM180568">
    <property type="protein sequence ID" value="CAS09116.1"/>
    <property type="molecule type" value="Genomic_DNA"/>
</dbReference>
<dbReference type="RefSeq" id="WP_000375975.1">
    <property type="nucleotide sequence ID" value="NC_011601.1"/>
</dbReference>
<dbReference type="SMR" id="B7URH4"/>
<dbReference type="KEGG" id="ecg:E2348C_1568"/>
<dbReference type="HOGENOM" id="CLU_023403_2_0_6"/>
<dbReference type="UniPathway" id="UPA00637"/>
<dbReference type="Proteomes" id="UP000008205">
    <property type="component" value="Chromosome"/>
</dbReference>
<dbReference type="GO" id="GO:0030288">
    <property type="term" value="C:outer membrane-bounded periplasmic space"/>
    <property type="evidence" value="ECO:0007669"/>
    <property type="project" value="TreeGrafter"/>
</dbReference>
<dbReference type="GO" id="GO:0030246">
    <property type="term" value="F:carbohydrate binding"/>
    <property type="evidence" value="ECO:0007669"/>
    <property type="project" value="InterPro"/>
</dbReference>
<dbReference type="GO" id="GO:0003824">
    <property type="term" value="F:catalytic activity"/>
    <property type="evidence" value="ECO:0007669"/>
    <property type="project" value="InterPro"/>
</dbReference>
<dbReference type="GO" id="GO:0051274">
    <property type="term" value="P:beta-glucan biosynthetic process"/>
    <property type="evidence" value="ECO:0007669"/>
    <property type="project" value="TreeGrafter"/>
</dbReference>
<dbReference type="FunFam" id="2.60.40.10:FF:000379">
    <property type="entry name" value="Glucans biosynthesis protein D"/>
    <property type="match status" value="1"/>
</dbReference>
<dbReference type="FunFam" id="2.70.98.10:FF:000004">
    <property type="entry name" value="Glucans biosynthesis protein D"/>
    <property type="match status" value="1"/>
</dbReference>
<dbReference type="Gene3D" id="2.70.98.10">
    <property type="match status" value="1"/>
</dbReference>
<dbReference type="Gene3D" id="2.60.40.10">
    <property type="entry name" value="Immunoglobulins"/>
    <property type="match status" value="1"/>
</dbReference>
<dbReference type="HAMAP" id="MF_01068">
    <property type="entry name" value="MdoD_OpgD"/>
    <property type="match status" value="1"/>
</dbReference>
<dbReference type="InterPro" id="IPR011013">
    <property type="entry name" value="Gal_mutarotase_sf_dom"/>
</dbReference>
<dbReference type="InterPro" id="IPR014718">
    <property type="entry name" value="GH-type_carb-bd"/>
</dbReference>
<dbReference type="InterPro" id="IPR023724">
    <property type="entry name" value="Glucan_biosyn_MdoD"/>
</dbReference>
<dbReference type="InterPro" id="IPR014438">
    <property type="entry name" value="Glucan_biosyn_MdoG/MdoD"/>
</dbReference>
<dbReference type="InterPro" id="IPR007444">
    <property type="entry name" value="Glucan_biosyn_MdoG_C"/>
</dbReference>
<dbReference type="InterPro" id="IPR013783">
    <property type="entry name" value="Ig-like_fold"/>
</dbReference>
<dbReference type="InterPro" id="IPR014756">
    <property type="entry name" value="Ig_E-set"/>
</dbReference>
<dbReference type="InterPro" id="IPR006311">
    <property type="entry name" value="TAT_signal"/>
</dbReference>
<dbReference type="InterPro" id="IPR019546">
    <property type="entry name" value="TAT_signal_bac_arc"/>
</dbReference>
<dbReference type="NCBIfam" id="TIGR01409">
    <property type="entry name" value="TAT_signal_seq"/>
    <property type="match status" value="1"/>
</dbReference>
<dbReference type="PANTHER" id="PTHR30504">
    <property type="entry name" value="GLUCANS BIOSYNTHESIS PROTEIN"/>
    <property type="match status" value="1"/>
</dbReference>
<dbReference type="PANTHER" id="PTHR30504:SF3">
    <property type="entry name" value="GLUCANS BIOSYNTHESIS PROTEIN D"/>
    <property type="match status" value="1"/>
</dbReference>
<dbReference type="Pfam" id="PF04349">
    <property type="entry name" value="MdoG"/>
    <property type="match status" value="1"/>
</dbReference>
<dbReference type="PIRSF" id="PIRSF006281">
    <property type="entry name" value="MdoG"/>
    <property type="match status" value="1"/>
</dbReference>
<dbReference type="SUPFAM" id="SSF81296">
    <property type="entry name" value="E set domains"/>
    <property type="match status" value="1"/>
</dbReference>
<dbReference type="SUPFAM" id="SSF74650">
    <property type="entry name" value="Galactose mutarotase-like"/>
    <property type="match status" value="1"/>
</dbReference>
<dbReference type="PROSITE" id="PS51318">
    <property type="entry name" value="TAT"/>
    <property type="match status" value="1"/>
</dbReference>
<reference key="1">
    <citation type="journal article" date="2009" name="J. Bacteriol.">
        <title>Complete genome sequence and comparative genome analysis of enteropathogenic Escherichia coli O127:H6 strain E2348/69.</title>
        <authorList>
            <person name="Iguchi A."/>
            <person name="Thomson N.R."/>
            <person name="Ogura Y."/>
            <person name="Saunders D."/>
            <person name="Ooka T."/>
            <person name="Henderson I.R."/>
            <person name="Harris D."/>
            <person name="Asadulghani M."/>
            <person name="Kurokawa K."/>
            <person name="Dean P."/>
            <person name="Kenny B."/>
            <person name="Quail M.A."/>
            <person name="Thurston S."/>
            <person name="Dougan G."/>
            <person name="Hayashi T."/>
            <person name="Parkhill J."/>
            <person name="Frankel G."/>
        </authorList>
    </citation>
    <scope>NUCLEOTIDE SEQUENCE [LARGE SCALE GENOMIC DNA]</scope>
    <source>
        <strain>E2348/69 / EPEC</strain>
    </source>
</reference>
<comment type="function">
    <text evidence="1">Probably involved in the control of the structural glucose backbone of osmoregulated periplasmic glucans (OPGs).</text>
</comment>
<comment type="pathway">
    <text evidence="1">Glycan metabolism; osmoregulated periplasmic glucan (OPG) biosynthesis.</text>
</comment>
<comment type="subcellular location">
    <subcellularLocation>
        <location evidence="1">Periplasm</location>
    </subcellularLocation>
</comment>
<comment type="PTM">
    <text>Predicted to be exported by the Tat system. The position of the signal peptide cleavage has not been experimentally proven.</text>
</comment>
<comment type="similarity">
    <text evidence="1">Belongs to the OpgD/OpgG family.</text>
</comment>
<accession>B7URH4</accession>
<organism>
    <name type="scientific">Escherichia coli O127:H6 (strain E2348/69 / EPEC)</name>
    <dbReference type="NCBI Taxonomy" id="574521"/>
    <lineage>
        <taxon>Bacteria</taxon>
        <taxon>Pseudomonadati</taxon>
        <taxon>Pseudomonadota</taxon>
        <taxon>Gammaproteobacteria</taxon>
        <taxon>Enterobacterales</taxon>
        <taxon>Enterobacteriaceae</taxon>
        <taxon>Escherichia</taxon>
    </lineage>
</organism>
<gene>
    <name evidence="1" type="primary">mdoD</name>
    <name evidence="1" type="synonym">opgD</name>
    <name type="ordered locus">E2348C_1568</name>
</gene>
<sequence>MDRRRFIKGSMAMAAVCGTSGIASLFSQAAFAADSDIADGQTQRFDLSILQSMAHDLAQTAWRGAPRPLPDTLATMTPQAYNSIQYDAEKSLWHNVENRQLDAQFFHMGMGFRRRVRMFSVDPATHLAREIHFRPELFKYNDAGVDTKQLEGQSDLGFAGFRVFKAPELARRDVVSFLGASYFRAVDDTYQYGLSARGLAIDTYTDSKEEFPDFTAFWFDTVKPGATTFTVYALLDSASITGAYKFTIHCEKNQVIMDVENHLYARKDIKQLGIAPMTSMFSCGTNERRMCDTIHPQIHDSDRLSMWRGNGEWICRPLNNPQKLQFNAYTDNNPKGFGLLQLDRDFSHYQDIMGWYNKRPSLWVEPRNKWGKGTIGLMEIPTTGETLDNIVCFWQPEKAVKAGDEFAFQYRLYWSAQPPVHCPLARVMATRTGMGGFPEGWAPGEHYPEKWARRFAVDFVGGDLKAAAPKGIEPVITLSSGEAKQIEILYIEPIDGYRIQFDWYPTSDSTDPVDMRMYLRCQGDAISETWLYQYFPPAPDKRQYVDDRVMS</sequence>
<keyword id="KW-0574">Periplasm</keyword>
<keyword id="KW-1185">Reference proteome</keyword>
<keyword id="KW-0732">Signal</keyword>
<feature type="signal peptide" description="Tat-type signal" evidence="1">
    <location>
        <begin position="1"/>
        <end position="32"/>
    </location>
</feature>
<feature type="chain" id="PRO_1000149745" description="Glucans biosynthesis protein D">
    <location>
        <begin position="33"/>
        <end position="551"/>
    </location>
</feature>
<evidence type="ECO:0000255" key="1">
    <source>
        <dbReference type="HAMAP-Rule" id="MF_01068"/>
    </source>
</evidence>
<protein>
    <recommendedName>
        <fullName evidence="1">Glucans biosynthesis protein D</fullName>
    </recommendedName>
</protein>